<accession>P80824</accession>
<protein>
    <recommendedName>
        <fullName>38 kDa cell wall protein</fullName>
    </recommendedName>
</protein>
<proteinExistence type="evidence at protein level"/>
<reference evidence="3" key="1">
    <citation type="journal article" date="1997" name="J. Biol. Chem.">
        <title>Differential extraction and protein sequencing reveals major differences in patterns of primary cell wall proteins from plants.</title>
        <authorList>
            <person name="Robertson D."/>
            <person name="Mitchell G.P."/>
            <person name="Gilroy J.S."/>
            <person name="Gerrish C."/>
            <person name="Bolwell G.P."/>
            <person name="Slabas A.R."/>
        </authorList>
    </citation>
    <scope>PROTEIN SEQUENCE</scope>
    <scope>SUBCELLULAR LOCATION</scope>
</reference>
<dbReference type="InParanoid" id="P80824"/>
<dbReference type="Proteomes" id="UP000004994">
    <property type="component" value="Unplaced"/>
</dbReference>
<dbReference type="GO" id="GO:0005576">
    <property type="term" value="C:extracellular region"/>
    <property type="evidence" value="ECO:0007669"/>
    <property type="project" value="UniProtKB-KW"/>
</dbReference>
<feature type="chain" id="PRO_0000079712" description="38 kDa cell wall protein">
    <location>
        <begin position="1"/>
        <end position="15" status="greater than"/>
    </location>
</feature>
<feature type="non-terminal residue" evidence="2">
    <location>
        <position position="15"/>
    </location>
</feature>
<comment type="subcellular location">
    <subcellularLocation>
        <location evidence="1">Secreted</location>
        <location evidence="1">Cell wall</location>
    </subcellularLocation>
</comment>
<organism>
    <name type="scientific">Solanum lycopersicum</name>
    <name type="common">Tomato</name>
    <name type="synonym">Lycopersicon esculentum</name>
    <dbReference type="NCBI Taxonomy" id="4081"/>
    <lineage>
        <taxon>Eukaryota</taxon>
        <taxon>Viridiplantae</taxon>
        <taxon>Streptophyta</taxon>
        <taxon>Embryophyta</taxon>
        <taxon>Tracheophyta</taxon>
        <taxon>Spermatophyta</taxon>
        <taxon>Magnoliopsida</taxon>
        <taxon>eudicotyledons</taxon>
        <taxon>Gunneridae</taxon>
        <taxon>Pentapetalae</taxon>
        <taxon>asterids</taxon>
        <taxon>lamiids</taxon>
        <taxon>Solanales</taxon>
        <taxon>Solanaceae</taxon>
        <taxon>Solanoideae</taxon>
        <taxon>Solaneae</taxon>
        <taxon>Solanum</taxon>
        <taxon>Solanum subgen. Lycopersicon</taxon>
    </lineage>
</organism>
<sequence length="15" mass="1669">VKIGTYELLKGDFSV</sequence>
<name>CWP28_SOLLC</name>
<keyword id="KW-0134">Cell wall</keyword>
<keyword id="KW-0903">Direct protein sequencing</keyword>
<keyword id="KW-1185">Reference proteome</keyword>
<keyword id="KW-0964">Secreted</keyword>
<evidence type="ECO:0000269" key="1">
    <source>
    </source>
</evidence>
<evidence type="ECO:0000303" key="2">
    <source>
    </source>
</evidence>
<evidence type="ECO:0000305" key="3"/>